<feature type="chain" id="PRO_0000450085" description="Non-reducing polyketide synthase ATEG_07661">
    <location>
        <begin position="1"/>
        <end position="2737"/>
    </location>
</feature>
<feature type="domain" description="Ketosynthase family 3 (KS3)" evidence="4">
    <location>
        <begin position="427"/>
        <end position="854"/>
    </location>
</feature>
<feature type="domain" description="PKS/mFAS DH" evidence="5">
    <location>
        <begin position="1368"/>
        <end position="1683"/>
    </location>
</feature>
<feature type="domain" description="Carrier" evidence="3">
    <location>
        <begin position="1750"/>
        <end position="1824"/>
    </location>
</feature>
<feature type="region of interest" description="N-terminal acylcarrier protein transacylase domain (SAT)" evidence="2">
    <location>
        <begin position="75"/>
        <end position="245"/>
    </location>
</feature>
<feature type="region of interest" description="Malonyl-CoA:ACP transacylase (MAT)" evidence="2">
    <location>
        <begin position="969"/>
        <end position="1260"/>
    </location>
</feature>
<feature type="region of interest" description="N-terminal hotdog fold" evidence="5">
    <location>
        <begin position="1368"/>
        <end position="1503"/>
    </location>
</feature>
<feature type="region of interest" description="Product template (PT) domain" evidence="2">
    <location>
        <begin position="1399"/>
        <end position="1681"/>
    </location>
</feature>
<feature type="region of interest" description="C-terminal hotdog fold" evidence="5">
    <location>
        <begin position="1535"/>
        <end position="1683"/>
    </location>
</feature>
<feature type="region of interest" description="Disordered" evidence="6">
    <location>
        <begin position="1724"/>
        <end position="1747"/>
    </location>
</feature>
<feature type="region of interest" description="Disordered" evidence="6">
    <location>
        <begin position="1827"/>
        <end position="1876"/>
    </location>
</feature>
<feature type="region of interest" description="Methyltransferase domain" evidence="2">
    <location>
        <begin position="2094"/>
        <end position="2270"/>
    </location>
</feature>
<feature type="region of interest" description="NADPH-binding domain" evidence="2">
    <location>
        <begin position="2362"/>
        <end position="2665"/>
    </location>
</feature>
<feature type="compositionally biased region" description="Basic residues" evidence="6">
    <location>
        <begin position="1725"/>
        <end position="1739"/>
    </location>
</feature>
<feature type="compositionally biased region" description="Acidic residues" evidence="6">
    <location>
        <begin position="1834"/>
        <end position="1848"/>
    </location>
</feature>
<feature type="compositionally biased region" description="Low complexity" evidence="6">
    <location>
        <begin position="1849"/>
        <end position="1866"/>
    </location>
</feature>
<feature type="active site" description="Nucleophile; for transacylase activity" evidence="1">
    <location>
        <position position="154"/>
    </location>
</feature>
<feature type="active site" description="Proton donor/acceptor; for transacylase activity" evidence="1">
    <location>
        <position position="276"/>
    </location>
</feature>
<feature type="active site" description="For beta-ketoacyl synthase activity" evidence="4">
    <location>
        <position position="603"/>
    </location>
</feature>
<feature type="active site" description="For beta-ketoacyl synthase activity" evidence="4">
    <location>
        <position position="738"/>
    </location>
</feature>
<feature type="active site" description="For beta-ketoacyl synthase activity" evidence="4">
    <location>
        <position position="777"/>
    </location>
</feature>
<feature type="active site" description="Proton acceptor; for dehydratase activity" evidence="5">
    <location>
        <position position="1403"/>
    </location>
</feature>
<feature type="active site" description="Proton donor; for dehydratase activity" evidence="5">
    <location>
        <position position="1592"/>
    </location>
</feature>
<feature type="modified residue" description="O-(pantetheine 4'-phosphoryl)serine" evidence="3">
    <location>
        <position position="1784"/>
    </location>
</feature>
<organism>
    <name type="scientific">Aspergillus terreus (strain NIH 2624 / FGSC A1156)</name>
    <dbReference type="NCBI Taxonomy" id="341663"/>
    <lineage>
        <taxon>Eukaryota</taxon>
        <taxon>Fungi</taxon>
        <taxon>Dikarya</taxon>
        <taxon>Ascomycota</taxon>
        <taxon>Pezizomycotina</taxon>
        <taxon>Eurotiomycetes</taxon>
        <taxon>Eurotiomycetidae</taxon>
        <taxon>Eurotiales</taxon>
        <taxon>Aspergillaceae</taxon>
        <taxon>Aspergillus</taxon>
        <taxon>Aspergillus subgen. Circumdati</taxon>
    </lineage>
</organism>
<sequence length="2737" mass="299142">MTHTTGPTKASGESTIFLFGPHVGTFTKQSMNKLVHPLSQSPQRDWILDTIAELPGYWDALAAKMPDVARDIDGSRSLAELDSWLRHGSANLGEDDSNLPSIIVGPLVVFIQLTQYWRHLELTKAGTQATDLQADLVAMHSNQTGDKVEILGFCAGLLAALAVASSNNRQEFQKYGAVAVRLAMLIGALIDAQEVWDKASGKGSSSSYAVAWRGPKQEEDMTRIIDDLAANAYIAVRYDQTRATVTASETIAPLLLKRFRAAGITVAEVGIKGQIHSPNPDRRAHTNALVDLCNSLPGLQYAAAERLALQTYDNQGDGKPLLPDRGSLTEMVLRSILVQQCHWYDTFSAVTERHQDPYVVTFGLERCVPPTLMRSLGGRQVFFEDLPKDPSHPSSWMPNAPHGPQQQLQQRQLPVEVHTKPAFDVSNEAIAIVGMSVKTAGADDLAEFAEMLKTGQSQHIPITRDRLMHDMLFRESADSDPKRKYYGCFFRDGDAFDHKFFKRSPREAAAMDPQSRIVLQTAYQAIEQSGYFAEDHTGYTPDGRDKAHVGVYLGSCGVDYEHNISCHDPNAFTATGALKSFITGRVSHLFGWTGPCMTFDTACSSSAVAIHTACRNLLSGECTAALAGGSNTVTNMNWFQNLAAGSFVSPTGQCKPFDDDADGYCRAEGAAFVFLKRLSDAVRDGNPILATIASSAVYQNQNCTPLFVPNSPSLSHLFKDVMHQAKITANDVSLVEAHGTGTPVGDPAEYESIRVALGGPIRKKTLPIGSVKGHIGHTEGASGAIALVKIIMMMREGFIPPQASFKKMNRKIPVRADDNMEVVTKLRPWDEPHKTALLNNYGACGSNASMIITEPDKALSGPIDGSRYRNTGQRYPFWIPGFDSRAITAYCAKLGSWLRSCRQEPTLADVSFNVNRQSNRSLTQGFIFNCRSMTELHEKLEQAAAAGKDAAANAGITPVKAERPVVLCFGGQVSRFVGLDRNLFESVAILRQHLDHVDAVVTSQGLGSIYPEIFEREPVRDTVKLQTMLFALQYACAKSWMDSGLQGKVQAVVGHSFGEITALCIAGVLSLEHTVQLVAARAALVRDNWGADPGAMMAIEADENLVNELLLEANRGSDGSASIACYNGPRSFTIAGSTGAIDAVQQTMGSNSKFGSIKSKRLSVTNAFHSALVDKISDGLERIGKTLTFHRPIIPVERATEMPFDMDNLDGSFVSQHMRQPVYFNHALQRLVKRYPQAIFLEAGSSSTITIMASRAIAQSQASSSDAHHFQAMSITSDTAFDSLTDATMALWKQGLRVSFWAHHAVQARDYAQLLLPPYQFDTSSRHWLPMKSPLEEVKKAAAAMVAAGGDVGTGQHQQNDALQDPRLQSLWNFVEFQDGDNKKPRFRINTGSDKYNRFVLSHVIAQTAPICPGTLECDIVIEALFSLEPTWKQEGVQPVVRDMINHSPICKDPSRTVYLDLTALNKKRTQWTVRIFSVDSNSSRQASETHAEASVEMRAPTDAAHLREFANFERLVSHQQCLDVLRLNLDEEGVEVLQGRNVYRAFNPIVDYGDVYRGVRYVVGRGNECAGSVQLPKCHRGDTWLDVPLSDSFSQVGGIWVNLLTDLPPSDMYIATGCGLSMRSPTAPPRADTDVWHVYARHSRQGDKAFMTDLFVFDPATGQLVELMLGVQYGRVAKASMSMMLARMTKDESVLRTKTPSSSHPAPTVKSVPIEASVAVKASRTTKKKAKASKSKSSVKKDKAPSGWRDITDEVRNLVATVSGIEASELELDSEMADFGIDSLMGMELGKEVETAFKCTLDQNEQMEATTLRKFVACVSNALFGPNQGQSSIDEDDEDDEHSEDSSNESSSAASDEDASSGLESPDTGILTPEDEPLPLKAVAIHKAAGLAAIAPPVESHLALSASDILESFGEVKMTTDRLMHEYGVHKTEKVMLAGSNRLCAALVVEAFDELGSPLRTAAAGQVIDRVPFLPQHGRLMQWVYEFLERDARLIDIDVTSGQITRTHIAPPRKTSHAILQELLASDPDFAVPNRLAYYAGKQLAGVLSGSTDGIRVLFGSPEGRELTAAMYCEHTFNCMSYAQMREVTKILADRIQSSSGSSGETFKVLEMGAGTGGTTLVMAPLLASLSDMGMAVEYTFTDISPSMVANARRRFSKLYPFMRFSVHDIEKAPADELKGQHLVLASNAIHATHNLGVSLSNIHQALRPDGFLMMLEMTEVVPFVDLVFGLLEGWWLFDDGRSHAVVPAEHWERELHAAGFGHVDWTDGSLPENAFQKVIIALASGTQGPRLPKPASVPEPIPELNPKSIETRTAHAEQLTATYSKGWATPKLRALDAKSEEGQVKPSGTSRLRKVDLGAVVLVTGATGSLGSHLVQKLADDPNVAQVVCLNRRSNSMPADKRQQEALATRGITLSPGGRAKLRILETDTSKAQLGLPPLEYSWLVEHGTDIVHNAWPMSGTRPVSAFEPQLQAMRNLLDLARDMACRDINPPSRVGFQFVSSIGVVGFVGESRVTERRVPLSATLPSGYGEAKWVCERMLDETLHKYPRLFRPMVVRPGQISGSSTSGFWNPVEHFAFLVKSAQALRAWPDLDGVLQWIPVNFCAGIIVDLLKIASRADDAYPVYHIDNPVGQPWKAMNPVLASALDIPPHAIIPFKDWISRVRRSPLPLETENPAARLVDFLDDHFERMSCGGLVLDTSKALEHSQTMATVGPVSSDVARLYVASWKKMGYLHS</sequence>
<name>AZPB2_ASPTN</name>
<reference key="1">
    <citation type="submission" date="2005-09" db="EMBL/GenBank/DDBJ databases">
        <title>Annotation of the Aspergillus terreus NIH2624 genome.</title>
        <authorList>
            <person name="Birren B.W."/>
            <person name="Lander E.S."/>
            <person name="Galagan J.E."/>
            <person name="Nusbaum C."/>
            <person name="Devon K."/>
            <person name="Henn M."/>
            <person name="Ma L.-J."/>
            <person name="Jaffe D.B."/>
            <person name="Butler J."/>
            <person name="Alvarez P."/>
            <person name="Gnerre S."/>
            <person name="Grabherr M."/>
            <person name="Kleber M."/>
            <person name="Mauceli E.W."/>
            <person name="Brockman W."/>
            <person name="Rounsley S."/>
            <person name="Young S.K."/>
            <person name="LaButti K."/>
            <person name="Pushparaj V."/>
            <person name="DeCaprio D."/>
            <person name="Crawford M."/>
            <person name="Koehrsen M."/>
            <person name="Engels R."/>
            <person name="Montgomery P."/>
            <person name="Pearson M."/>
            <person name="Howarth C."/>
            <person name="Larson L."/>
            <person name="Luoma S."/>
            <person name="White J."/>
            <person name="Alvarado L."/>
            <person name="Kodira C.D."/>
            <person name="Zeng Q."/>
            <person name="Oleary S."/>
            <person name="Yandava C."/>
            <person name="Denning D.W."/>
            <person name="Nierman W.C."/>
            <person name="Milne T."/>
            <person name="Madden K."/>
        </authorList>
    </citation>
    <scope>NUCLEOTIDE SEQUENCE [LARGE SCALE GENOMIC DNA]</scope>
    <source>
        <strain>NIH 2624 / FGSC A1156</strain>
    </source>
</reference>
<reference key="2">
    <citation type="journal article" date="2013" name="J. Am. Chem. Soc.">
        <title>An efficient system for heterologous expression of secondary metabolite genes in Aspergillus nidulans.</title>
        <authorList>
            <person name="Chiang Y.M."/>
            <person name="Oakley C.E."/>
            <person name="Ahuja M."/>
            <person name="Entwistle R."/>
            <person name="Schultz A."/>
            <person name="Chang S.L."/>
            <person name="Sung C.T."/>
            <person name="Wang C.C."/>
            <person name="Oakley B.R."/>
        </authorList>
    </citation>
    <scope>FUNCTION</scope>
    <scope>CATALYTIC ACTIVITY</scope>
    <scope>PATHWAY</scope>
</reference>
<reference key="3">
    <citation type="journal article" date="2014" name="Chem. Biol.">
        <title>Aryl-aldehyde formation in fungal polyketides: discovery and characterization of a distinct biosynthetic mechanism.</title>
        <authorList>
            <person name="Wang M."/>
            <person name="Beissner M."/>
            <person name="Zhao H."/>
        </authorList>
    </citation>
    <scope>FUNCTION</scope>
</reference>
<reference key="4">
    <citation type="journal article" date="2020" name="Angew. Chem. Int. Ed.">
        <title>Collaborative biosynthesis of a class of bioactive azaphilones by two separate gene clusters containing four PKS/NRPSs with transcriptional cosstalk in fungi.</title>
        <authorList>
            <person name="Huang X."/>
            <person name="Zhang W."/>
            <person name="Tang S."/>
            <person name="Wei S."/>
            <person name="Lu X."/>
        </authorList>
    </citation>
    <scope>FUNCTION</scope>
    <scope>INDUCTION</scope>
    <scope>DISRUPTION PHENOTYPE</scope>
    <scope>PATHWAY</scope>
    <scope>BIOTECHNOLOGY</scope>
</reference>
<evidence type="ECO:0000250" key="1">
    <source>
        <dbReference type="UniProtKB" id="A0A0K0MCJ4"/>
    </source>
</evidence>
<evidence type="ECO:0000255" key="2"/>
<evidence type="ECO:0000255" key="3">
    <source>
        <dbReference type="PROSITE-ProRule" id="PRU00258"/>
    </source>
</evidence>
<evidence type="ECO:0000255" key="4">
    <source>
        <dbReference type="PROSITE-ProRule" id="PRU01348"/>
    </source>
</evidence>
<evidence type="ECO:0000255" key="5">
    <source>
        <dbReference type="PROSITE-ProRule" id="PRU01363"/>
    </source>
</evidence>
<evidence type="ECO:0000256" key="6">
    <source>
        <dbReference type="SAM" id="MobiDB-lite"/>
    </source>
</evidence>
<evidence type="ECO:0000269" key="7">
    <source>
    </source>
</evidence>
<evidence type="ECO:0000269" key="8">
    <source>
    </source>
</evidence>
<evidence type="ECO:0000303" key="9">
    <source>
    </source>
</evidence>
<evidence type="ECO:0000305" key="10">
    <source>
    </source>
</evidence>
<proteinExistence type="evidence at protein level"/>
<accession>Q0CF73</accession>
<dbReference type="EC" id="2.3.1.-" evidence="10"/>
<dbReference type="EMBL" id="CH476604">
    <property type="protein sequence ID" value="EAU31923.1"/>
    <property type="molecule type" value="Genomic_DNA"/>
</dbReference>
<dbReference type="RefSeq" id="XP_001216282.1">
    <property type="nucleotide sequence ID" value="XM_001216282.1"/>
</dbReference>
<dbReference type="SMR" id="Q0CF73"/>
<dbReference type="STRING" id="341663.Q0CF73"/>
<dbReference type="EnsemblFungi" id="EAU31923">
    <property type="protein sequence ID" value="EAU31923"/>
    <property type="gene ID" value="ATEG_07661"/>
</dbReference>
<dbReference type="GeneID" id="4323014"/>
<dbReference type="VEuPathDB" id="FungiDB:ATEG_07661"/>
<dbReference type="eggNOG" id="KOG1178">
    <property type="taxonomic scope" value="Eukaryota"/>
</dbReference>
<dbReference type="eggNOG" id="KOG1202">
    <property type="taxonomic scope" value="Eukaryota"/>
</dbReference>
<dbReference type="HOGENOM" id="CLU_000022_6_2_1"/>
<dbReference type="OMA" id="VWHVYAR"/>
<dbReference type="OrthoDB" id="329835at2759"/>
<dbReference type="Proteomes" id="UP000007963">
    <property type="component" value="Unassembled WGS sequence"/>
</dbReference>
<dbReference type="GO" id="GO:0004315">
    <property type="term" value="F:3-oxoacyl-[acyl-carrier-protein] synthase activity"/>
    <property type="evidence" value="ECO:0007669"/>
    <property type="project" value="InterPro"/>
</dbReference>
<dbReference type="GO" id="GO:0008168">
    <property type="term" value="F:methyltransferase activity"/>
    <property type="evidence" value="ECO:0007669"/>
    <property type="project" value="UniProtKB-KW"/>
</dbReference>
<dbReference type="GO" id="GO:0031177">
    <property type="term" value="F:phosphopantetheine binding"/>
    <property type="evidence" value="ECO:0007669"/>
    <property type="project" value="InterPro"/>
</dbReference>
<dbReference type="GO" id="GO:0006633">
    <property type="term" value="P:fatty acid biosynthetic process"/>
    <property type="evidence" value="ECO:0007669"/>
    <property type="project" value="InterPro"/>
</dbReference>
<dbReference type="GO" id="GO:0032259">
    <property type="term" value="P:methylation"/>
    <property type="evidence" value="ECO:0007669"/>
    <property type="project" value="UniProtKB-KW"/>
</dbReference>
<dbReference type="CDD" id="cd02440">
    <property type="entry name" value="AdoMet_MTases"/>
    <property type="match status" value="1"/>
</dbReference>
<dbReference type="CDD" id="cd00833">
    <property type="entry name" value="PKS"/>
    <property type="match status" value="1"/>
</dbReference>
<dbReference type="Gene3D" id="3.30.70.3290">
    <property type="match status" value="1"/>
</dbReference>
<dbReference type="Gene3D" id="3.40.47.10">
    <property type="match status" value="1"/>
</dbReference>
<dbReference type="Gene3D" id="1.10.1200.10">
    <property type="entry name" value="ACP-like"/>
    <property type="match status" value="1"/>
</dbReference>
<dbReference type="Gene3D" id="3.40.366.10">
    <property type="entry name" value="Malonyl-Coenzyme A Acyl Carrier Protein, domain 2"/>
    <property type="match status" value="2"/>
</dbReference>
<dbReference type="Gene3D" id="3.40.50.720">
    <property type="entry name" value="NAD(P)-binding Rossmann-like Domain"/>
    <property type="match status" value="1"/>
</dbReference>
<dbReference type="Gene3D" id="3.10.129.110">
    <property type="entry name" value="Polyketide synthase dehydratase"/>
    <property type="match status" value="1"/>
</dbReference>
<dbReference type="Gene3D" id="3.40.50.150">
    <property type="entry name" value="Vaccinia Virus protein VP39"/>
    <property type="match status" value="1"/>
</dbReference>
<dbReference type="InterPro" id="IPR001227">
    <property type="entry name" value="Ac_transferase_dom_sf"/>
</dbReference>
<dbReference type="InterPro" id="IPR036736">
    <property type="entry name" value="ACP-like_sf"/>
</dbReference>
<dbReference type="InterPro" id="IPR014043">
    <property type="entry name" value="Acyl_transferase_dom"/>
</dbReference>
<dbReference type="InterPro" id="IPR016035">
    <property type="entry name" value="Acyl_Trfase/lysoPLipase"/>
</dbReference>
<dbReference type="InterPro" id="IPR013120">
    <property type="entry name" value="Far_NAD-bd"/>
</dbReference>
<dbReference type="InterPro" id="IPR018201">
    <property type="entry name" value="Ketoacyl_synth_AS"/>
</dbReference>
<dbReference type="InterPro" id="IPR014031">
    <property type="entry name" value="Ketoacyl_synth_C"/>
</dbReference>
<dbReference type="InterPro" id="IPR014030">
    <property type="entry name" value="Ketoacyl_synth_N"/>
</dbReference>
<dbReference type="InterPro" id="IPR016036">
    <property type="entry name" value="Malonyl_transacylase_ACP-bd"/>
</dbReference>
<dbReference type="InterPro" id="IPR013217">
    <property type="entry name" value="Methyltransf_12"/>
</dbReference>
<dbReference type="InterPro" id="IPR036291">
    <property type="entry name" value="NAD(P)-bd_dom_sf"/>
</dbReference>
<dbReference type="InterPro" id="IPR020841">
    <property type="entry name" value="PKS_Beta-ketoAc_synthase_dom"/>
</dbReference>
<dbReference type="InterPro" id="IPR042104">
    <property type="entry name" value="PKS_dehydratase_sf"/>
</dbReference>
<dbReference type="InterPro" id="IPR049900">
    <property type="entry name" value="PKS_mFAS_DH"/>
</dbReference>
<dbReference type="InterPro" id="IPR020806">
    <property type="entry name" value="PKS_PP-bd"/>
</dbReference>
<dbReference type="InterPro" id="IPR050444">
    <property type="entry name" value="Polyketide_Synthase"/>
</dbReference>
<dbReference type="InterPro" id="IPR009081">
    <property type="entry name" value="PP-bd_ACP"/>
</dbReference>
<dbReference type="InterPro" id="IPR006162">
    <property type="entry name" value="Ppantetheine_attach_site"/>
</dbReference>
<dbReference type="InterPro" id="IPR029063">
    <property type="entry name" value="SAM-dependent_MTases_sf"/>
</dbReference>
<dbReference type="InterPro" id="IPR032088">
    <property type="entry name" value="SAT"/>
</dbReference>
<dbReference type="InterPro" id="IPR016039">
    <property type="entry name" value="Thiolase-like"/>
</dbReference>
<dbReference type="PANTHER" id="PTHR45681:SF6">
    <property type="entry name" value="POLYKETIDE SYNTHASE 37"/>
    <property type="match status" value="1"/>
</dbReference>
<dbReference type="PANTHER" id="PTHR45681">
    <property type="entry name" value="POLYKETIDE SYNTHASE 44-RELATED"/>
    <property type="match status" value="1"/>
</dbReference>
<dbReference type="Pfam" id="PF00698">
    <property type="entry name" value="Acyl_transf_1"/>
    <property type="match status" value="1"/>
</dbReference>
<dbReference type="Pfam" id="PF18558">
    <property type="entry name" value="HTH_51"/>
    <property type="match status" value="1"/>
</dbReference>
<dbReference type="Pfam" id="PF00109">
    <property type="entry name" value="ketoacyl-synt"/>
    <property type="match status" value="1"/>
</dbReference>
<dbReference type="Pfam" id="PF02801">
    <property type="entry name" value="Ketoacyl-synt_C"/>
    <property type="match status" value="1"/>
</dbReference>
<dbReference type="Pfam" id="PF08242">
    <property type="entry name" value="Methyltransf_12"/>
    <property type="match status" value="1"/>
</dbReference>
<dbReference type="Pfam" id="PF07993">
    <property type="entry name" value="NAD_binding_4"/>
    <property type="match status" value="1"/>
</dbReference>
<dbReference type="Pfam" id="PF00550">
    <property type="entry name" value="PP-binding"/>
    <property type="match status" value="1"/>
</dbReference>
<dbReference type="Pfam" id="PF16073">
    <property type="entry name" value="SAT"/>
    <property type="match status" value="1"/>
</dbReference>
<dbReference type="SMART" id="SM00827">
    <property type="entry name" value="PKS_AT"/>
    <property type="match status" value="1"/>
</dbReference>
<dbReference type="SMART" id="SM00825">
    <property type="entry name" value="PKS_KS"/>
    <property type="match status" value="1"/>
</dbReference>
<dbReference type="SMART" id="SM00823">
    <property type="entry name" value="PKS_PP"/>
    <property type="match status" value="1"/>
</dbReference>
<dbReference type="SUPFAM" id="SSF47336">
    <property type="entry name" value="ACP-like"/>
    <property type="match status" value="1"/>
</dbReference>
<dbReference type="SUPFAM" id="SSF52151">
    <property type="entry name" value="FabD/lysophospholipase-like"/>
    <property type="match status" value="1"/>
</dbReference>
<dbReference type="SUPFAM" id="SSF51735">
    <property type="entry name" value="NAD(P)-binding Rossmann-fold domains"/>
    <property type="match status" value="1"/>
</dbReference>
<dbReference type="SUPFAM" id="SSF55048">
    <property type="entry name" value="Probable ACP-binding domain of malonyl-CoA ACP transacylase"/>
    <property type="match status" value="1"/>
</dbReference>
<dbReference type="SUPFAM" id="SSF53335">
    <property type="entry name" value="S-adenosyl-L-methionine-dependent methyltransferases"/>
    <property type="match status" value="1"/>
</dbReference>
<dbReference type="SUPFAM" id="SSF53901">
    <property type="entry name" value="Thiolase-like"/>
    <property type="match status" value="1"/>
</dbReference>
<dbReference type="PROSITE" id="PS50075">
    <property type="entry name" value="CARRIER"/>
    <property type="match status" value="1"/>
</dbReference>
<dbReference type="PROSITE" id="PS00606">
    <property type="entry name" value="KS3_1"/>
    <property type="match status" value="1"/>
</dbReference>
<dbReference type="PROSITE" id="PS52004">
    <property type="entry name" value="KS3_2"/>
    <property type="match status" value="1"/>
</dbReference>
<dbReference type="PROSITE" id="PS00012">
    <property type="entry name" value="PHOSPHOPANTETHEINE"/>
    <property type="match status" value="1"/>
</dbReference>
<dbReference type="PROSITE" id="PS52019">
    <property type="entry name" value="PKS_MFAS_DH"/>
    <property type="match status" value="1"/>
</dbReference>
<protein>
    <recommendedName>
        <fullName evidence="9">Non-reducing polyketide synthase ATEG_07661</fullName>
        <shortName evidence="9">NR-PKS</shortName>
        <ecNumber evidence="10">2.3.1.-</ecNumber>
    </recommendedName>
    <alternativeName>
        <fullName evidence="9">Azasperpyranone A biosynthesis cluster B protein ATEG_07661</fullName>
    </alternativeName>
</protein>
<comment type="function">
    <text evidence="7 8 10">Non-reducing polyketide synthase; part of the cluster B that mediates the biosynthesis of azasperpyranones, members of the azaphilone family that exhibit anti-cancer activities (PubMed:31908094). Azasperpyranones are synthesized by 2 clusters, A and B (PubMed:31908094). Cluster A is responsible for the production of the polyhydric phenol moiety while the azaphilonoid scaffold is produced by the cluster B (PubMed:31908094). The non-reducing polyketide synthase ATEG_03629 produces 5-methyl orsellinic acid, which is then reduced to 5-methyl orsellinic aldehyde by the NRPS-like protein ATEG_03630 (PubMed:24412543). 5-methyl orsellinic aldehyde is then first hydroxylated by the FAD-dependent monooxygenase ATEG_03635 and subsequently hydroxylated by the cytochrome P450 monooxygenase ATEG_03631 to produce the unstable polyhydric phenol precursor of azasperpyranones (PubMed:31908094). On the other hand, the polyketide synthase ATEG_07659 is responsible for producing the 3,5-dimethyloctadienone moiety from acetyl-CoA, three malonyl-CoA, and two S-adenosyl methionines (SAM) (Probable). The 3,5-dimethyloctadienone moiety is then loaded onto the SAT domain of ATEG_07661 and extended with four malonyl-CoA and one SAM, which leads to the formation of 2,4-dihydroxy-6-(5,7-dimethyl-2-oxo-trans-3-trans-5-nonadienyl)-3-methylbenzaldehyde (compound 8) after reductive release and aldol condensation (Probable). The FAD-dependent monooxygenase ATEG_07662 is the next enzyme in the biosynthesis sequence and hydroxylates the side chain at the benzylic position of compound 8 (Probable). In Aspergillus nidulans, afoF, the ortholog of the FAD-dependent oxygenase ATEG_07660, is the key enzyme for the biosynthesis of asperfuranone by catalyzing the hydroxylation at C-8 of to prevent the formation of a six-membered ring hemiacetal intermediate and thus facilitating the formation of a five-membered ring to produce asperfuranone (Probable). In Aspergillus terreus, ATEG_07660 is probably not functional, which leads to the formation of the six-membered ring hemiacetal intermediate presperpyranone instead of asperfuranone (Probable). Finally, ATEG_03636 is involved in the condensation of the polyhydric phenol moiety produced by cluster A and the perasperpyranone precursor produced by cluster B, to yield azasperpyranone A (Probable). Further modifications of azasperpyranone A result in the production of derivatives, including azasperpyranone B to F (PubMed:31908094).</text>
</comment>
<comment type="pathway">
    <text evidence="8">Secondary metabolite biosynthesis.</text>
</comment>
<comment type="induction">
    <text evidence="8">Expression is induced by the azasperpyranone cluster A-specific transcription factor ATEG_07666 which is itself regulated by the azasperpyranone transcriptional regulator ATEG_07667.</text>
</comment>
<comment type="domain">
    <text evidence="10">Multidomain protein; including an N-terminal starter unit:ACP transacylase (SAT) domain, a beta-ketoacyl synthase (KS) domain, a malonyl-CoA:ACP transacylase (MAT) domain, a product template domain, a acyl carrier protein (ACP) domain, a methyltransferase domain and a reductive NADPH-binding domain that is required for NADPH-dependent product release.</text>
</comment>
<comment type="domain">
    <text evidence="10">Multidomain protein; including a starter unit:ACP transacylase (SAT) that selects the starter unit; a ketosynthase (KS) that catalyzes repeated decarboxylative condensation to elongate the polyketide backbone; a malonyl-CoA:ACP transacylase (MAT) that selects and transfers the extender unit malonyl-CoA; a product template (PT) domain that controls the immediate cyclization regioselectivity of the reactive polyketide backbone; a methyltransferase domain; a reductive NADPH-binding domain that is required for NADPH-dependent product release; and an acyl-carrier protein (ACP) that serves as the tether of the growing and completed polyketide via its phosphopantetheinyl arm.</text>
</comment>
<comment type="disruption phenotype">
    <text evidence="8">Abolishes the production of azasperpyranone A(AZA-A).</text>
</comment>
<comment type="biotechnology">
    <text evidence="8">Azasperpyranones display potential anti-cancer activities (PubMed:31908094). Azasperpyranones A, C, D, and F exhibit potent growth-inhibitory activity against the A549, HepG2, HCT-116, and HL-60 cell lines, with IC(50) values of 2.39-14.42 mm, respectively (PubMed:31908094). Moreover, azasperpyranone D significantly inhibits HCT-116 xenograft tumor growth in BALB/c-nu mice (PubMed:31908094). In addition, azasperpyranones A and C can bind with four kinds of therapeutic targets for cancer, eEF2K, FGFR, survivin, and TNF-a (PubMed:31908094).</text>
</comment>
<gene>
    <name type="ORF">ATEG_07661</name>
</gene>
<keyword id="KW-0012">Acyltransferase</keyword>
<keyword id="KW-0489">Methyltransferase</keyword>
<keyword id="KW-0511">Multifunctional enzyme</keyword>
<keyword id="KW-0521">NADP</keyword>
<keyword id="KW-0596">Phosphopantetheine</keyword>
<keyword id="KW-0597">Phosphoprotein</keyword>
<keyword id="KW-1185">Reference proteome</keyword>
<keyword id="KW-0808">Transferase</keyword>